<reference evidence="8" key="1">
    <citation type="journal article" date="2005" name="Science">
        <title>The transcriptional landscape of the mammalian genome.</title>
        <authorList>
            <person name="Carninci P."/>
            <person name="Kasukawa T."/>
            <person name="Katayama S."/>
            <person name="Gough J."/>
            <person name="Frith M.C."/>
            <person name="Maeda N."/>
            <person name="Oyama R."/>
            <person name="Ravasi T."/>
            <person name="Lenhard B."/>
            <person name="Wells C."/>
            <person name="Kodzius R."/>
            <person name="Shimokawa K."/>
            <person name="Bajic V.B."/>
            <person name="Brenner S.E."/>
            <person name="Batalov S."/>
            <person name="Forrest A.R."/>
            <person name="Zavolan M."/>
            <person name="Davis M.J."/>
            <person name="Wilming L.G."/>
            <person name="Aidinis V."/>
            <person name="Allen J.E."/>
            <person name="Ambesi-Impiombato A."/>
            <person name="Apweiler R."/>
            <person name="Aturaliya R.N."/>
            <person name="Bailey T.L."/>
            <person name="Bansal M."/>
            <person name="Baxter L."/>
            <person name="Beisel K.W."/>
            <person name="Bersano T."/>
            <person name="Bono H."/>
            <person name="Chalk A.M."/>
            <person name="Chiu K.P."/>
            <person name="Choudhary V."/>
            <person name="Christoffels A."/>
            <person name="Clutterbuck D.R."/>
            <person name="Crowe M.L."/>
            <person name="Dalla E."/>
            <person name="Dalrymple B.P."/>
            <person name="de Bono B."/>
            <person name="Della Gatta G."/>
            <person name="di Bernardo D."/>
            <person name="Down T."/>
            <person name="Engstrom P."/>
            <person name="Fagiolini M."/>
            <person name="Faulkner G."/>
            <person name="Fletcher C.F."/>
            <person name="Fukushima T."/>
            <person name="Furuno M."/>
            <person name="Futaki S."/>
            <person name="Gariboldi M."/>
            <person name="Georgii-Hemming P."/>
            <person name="Gingeras T.R."/>
            <person name="Gojobori T."/>
            <person name="Green R.E."/>
            <person name="Gustincich S."/>
            <person name="Harbers M."/>
            <person name="Hayashi Y."/>
            <person name="Hensch T.K."/>
            <person name="Hirokawa N."/>
            <person name="Hill D."/>
            <person name="Huminiecki L."/>
            <person name="Iacono M."/>
            <person name="Ikeo K."/>
            <person name="Iwama A."/>
            <person name="Ishikawa T."/>
            <person name="Jakt M."/>
            <person name="Kanapin A."/>
            <person name="Katoh M."/>
            <person name="Kawasawa Y."/>
            <person name="Kelso J."/>
            <person name="Kitamura H."/>
            <person name="Kitano H."/>
            <person name="Kollias G."/>
            <person name="Krishnan S.P."/>
            <person name="Kruger A."/>
            <person name="Kummerfeld S.K."/>
            <person name="Kurochkin I.V."/>
            <person name="Lareau L.F."/>
            <person name="Lazarevic D."/>
            <person name="Lipovich L."/>
            <person name="Liu J."/>
            <person name="Liuni S."/>
            <person name="McWilliam S."/>
            <person name="Madan Babu M."/>
            <person name="Madera M."/>
            <person name="Marchionni L."/>
            <person name="Matsuda H."/>
            <person name="Matsuzawa S."/>
            <person name="Miki H."/>
            <person name="Mignone F."/>
            <person name="Miyake S."/>
            <person name="Morris K."/>
            <person name="Mottagui-Tabar S."/>
            <person name="Mulder N."/>
            <person name="Nakano N."/>
            <person name="Nakauchi H."/>
            <person name="Ng P."/>
            <person name="Nilsson R."/>
            <person name="Nishiguchi S."/>
            <person name="Nishikawa S."/>
            <person name="Nori F."/>
            <person name="Ohara O."/>
            <person name="Okazaki Y."/>
            <person name="Orlando V."/>
            <person name="Pang K.C."/>
            <person name="Pavan W.J."/>
            <person name="Pavesi G."/>
            <person name="Pesole G."/>
            <person name="Petrovsky N."/>
            <person name="Piazza S."/>
            <person name="Reed J."/>
            <person name="Reid J.F."/>
            <person name="Ring B.Z."/>
            <person name="Ringwald M."/>
            <person name="Rost B."/>
            <person name="Ruan Y."/>
            <person name="Salzberg S.L."/>
            <person name="Sandelin A."/>
            <person name="Schneider C."/>
            <person name="Schoenbach C."/>
            <person name="Sekiguchi K."/>
            <person name="Semple C.A."/>
            <person name="Seno S."/>
            <person name="Sessa L."/>
            <person name="Sheng Y."/>
            <person name="Shibata Y."/>
            <person name="Shimada H."/>
            <person name="Shimada K."/>
            <person name="Silva D."/>
            <person name="Sinclair B."/>
            <person name="Sperling S."/>
            <person name="Stupka E."/>
            <person name="Sugiura K."/>
            <person name="Sultana R."/>
            <person name="Takenaka Y."/>
            <person name="Taki K."/>
            <person name="Tammoja K."/>
            <person name="Tan S.L."/>
            <person name="Tang S."/>
            <person name="Taylor M.S."/>
            <person name="Tegner J."/>
            <person name="Teichmann S.A."/>
            <person name="Ueda H.R."/>
            <person name="van Nimwegen E."/>
            <person name="Verardo R."/>
            <person name="Wei C.L."/>
            <person name="Yagi K."/>
            <person name="Yamanishi H."/>
            <person name="Zabarovsky E."/>
            <person name="Zhu S."/>
            <person name="Zimmer A."/>
            <person name="Hide W."/>
            <person name="Bult C."/>
            <person name="Grimmond S.M."/>
            <person name="Teasdale R.D."/>
            <person name="Liu E.T."/>
            <person name="Brusic V."/>
            <person name="Quackenbush J."/>
            <person name="Wahlestedt C."/>
            <person name="Mattick J.S."/>
            <person name="Hume D.A."/>
            <person name="Kai C."/>
            <person name="Sasaki D."/>
            <person name="Tomaru Y."/>
            <person name="Fukuda S."/>
            <person name="Kanamori-Katayama M."/>
            <person name="Suzuki M."/>
            <person name="Aoki J."/>
            <person name="Arakawa T."/>
            <person name="Iida J."/>
            <person name="Imamura K."/>
            <person name="Itoh M."/>
            <person name="Kato T."/>
            <person name="Kawaji H."/>
            <person name="Kawagashira N."/>
            <person name="Kawashima T."/>
            <person name="Kojima M."/>
            <person name="Kondo S."/>
            <person name="Konno H."/>
            <person name="Nakano K."/>
            <person name="Ninomiya N."/>
            <person name="Nishio T."/>
            <person name="Okada M."/>
            <person name="Plessy C."/>
            <person name="Shibata K."/>
            <person name="Shiraki T."/>
            <person name="Suzuki S."/>
            <person name="Tagami M."/>
            <person name="Waki K."/>
            <person name="Watahiki A."/>
            <person name="Okamura-Oho Y."/>
            <person name="Suzuki H."/>
            <person name="Kawai J."/>
            <person name="Hayashizaki Y."/>
        </authorList>
    </citation>
    <scope>NUCLEOTIDE SEQUENCE [LARGE SCALE MRNA]</scope>
    <source>
        <strain evidence="8">C57BL/6J</strain>
        <tissue evidence="8">Skin</tissue>
        <tissue evidence="7">Vagina</tissue>
    </source>
</reference>
<reference key="2">
    <citation type="journal article" date="2009" name="PLoS Biol.">
        <title>Lineage-specific biology revealed by a finished genome assembly of the mouse.</title>
        <authorList>
            <person name="Church D.M."/>
            <person name="Goodstadt L."/>
            <person name="Hillier L.W."/>
            <person name="Zody M.C."/>
            <person name="Goldstein S."/>
            <person name="She X."/>
            <person name="Bult C.J."/>
            <person name="Agarwala R."/>
            <person name="Cherry J.L."/>
            <person name="DiCuccio M."/>
            <person name="Hlavina W."/>
            <person name="Kapustin Y."/>
            <person name="Meric P."/>
            <person name="Maglott D."/>
            <person name="Birtle Z."/>
            <person name="Marques A.C."/>
            <person name="Graves T."/>
            <person name="Zhou S."/>
            <person name="Teague B."/>
            <person name="Potamousis K."/>
            <person name="Churas C."/>
            <person name="Place M."/>
            <person name="Herschleb J."/>
            <person name="Runnheim R."/>
            <person name="Forrest D."/>
            <person name="Amos-Landgraf J."/>
            <person name="Schwartz D.C."/>
            <person name="Cheng Z."/>
            <person name="Lindblad-Toh K."/>
            <person name="Eichler E.E."/>
            <person name="Ponting C.P."/>
        </authorList>
    </citation>
    <scope>NUCLEOTIDE SEQUENCE [LARGE SCALE GENOMIC DNA]</scope>
    <source>
        <strain>C57BL/6J</strain>
    </source>
</reference>
<reference evidence="6" key="3">
    <citation type="journal article" date="2004" name="Genome Res.">
        <title>The status, quality, and expansion of the NIH full-length cDNA project: the Mammalian Gene Collection (MGC).</title>
        <authorList>
            <consortium name="The MGC Project Team"/>
        </authorList>
    </citation>
    <scope>NUCLEOTIDE SEQUENCE [LARGE SCALE MRNA]</scope>
    <source>
        <strain evidence="6">FVB/N-3</strain>
        <tissue evidence="6">Mammary gland</tissue>
    </source>
</reference>
<feature type="chain" id="PRO_0000326439" description="Rho-related GTP-binding protein RhoV">
    <location>
        <begin position="1"/>
        <end position="236"/>
    </location>
</feature>
<feature type="region of interest" description="Disordered" evidence="5">
    <location>
        <begin position="1"/>
        <end position="27"/>
    </location>
</feature>
<feature type="compositionally biased region" description="Pro residues" evidence="5">
    <location>
        <begin position="10"/>
        <end position="20"/>
    </location>
</feature>
<feature type="binding site" evidence="4">
    <location>
        <begin position="38"/>
        <end position="45"/>
    </location>
    <ligand>
        <name>GTP</name>
        <dbReference type="ChEBI" id="CHEBI:37565"/>
    </ligand>
</feature>
<feature type="binding site" evidence="2">
    <location>
        <begin position="85"/>
        <end position="89"/>
    </location>
    <ligand>
        <name>GTP</name>
        <dbReference type="ChEBI" id="CHEBI:37565"/>
    </ligand>
</feature>
<feature type="binding site" evidence="1">
    <location>
        <begin position="143"/>
        <end position="146"/>
    </location>
    <ligand>
        <name>GTP</name>
        <dbReference type="ChEBI" id="CHEBI:37565"/>
    </ligand>
</feature>
<feature type="modified residue" description="Phosphoserine" evidence="3">
    <location>
        <position position="25"/>
    </location>
</feature>
<feature type="lipid moiety-binding region" description="S-palmitoyl cysteine" evidence="4">
    <location>
        <position position="234"/>
    </location>
</feature>
<accession>Q8VDU1</accession>
<organism>
    <name type="scientific">Mus musculus</name>
    <name type="common">Mouse</name>
    <dbReference type="NCBI Taxonomy" id="10090"/>
    <lineage>
        <taxon>Eukaryota</taxon>
        <taxon>Metazoa</taxon>
        <taxon>Chordata</taxon>
        <taxon>Craniata</taxon>
        <taxon>Vertebrata</taxon>
        <taxon>Euteleostomi</taxon>
        <taxon>Mammalia</taxon>
        <taxon>Eutheria</taxon>
        <taxon>Euarchontoglires</taxon>
        <taxon>Glires</taxon>
        <taxon>Rodentia</taxon>
        <taxon>Myomorpha</taxon>
        <taxon>Muroidea</taxon>
        <taxon>Muridae</taxon>
        <taxon>Murinae</taxon>
        <taxon>Mus</taxon>
        <taxon>Mus</taxon>
    </lineage>
</organism>
<proteinExistence type="evidence at transcript level"/>
<keyword id="KW-1003">Cell membrane</keyword>
<keyword id="KW-0967">Endosome</keyword>
<keyword id="KW-0342">GTP-binding</keyword>
<keyword id="KW-0449">Lipoprotein</keyword>
<keyword id="KW-0460">Magnesium</keyword>
<keyword id="KW-0472">Membrane</keyword>
<keyword id="KW-0479">Metal-binding</keyword>
<keyword id="KW-0547">Nucleotide-binding</keyword>
<keyword id="KW-0564">Palmitate</keyword>
<keyword id="KW-0597">Phosphoprotein</keyword>
<keyword id="KW-1185">Reference proteome</keyword>
<dbReference type="EMBL" id="AK036775">
    <property type="protein sequence ID" value="BAC29571.1"/>
    <property type="molecule type" value="mRNA"/>
</dbReference>
<dbReference type="EMBL" id="AK037170">
    <property type="protein sequence ID" value="BAC29732.1"/>
    <property type="molecule type" value="mRNA"/>
</dbReference>
<dbReference type="EMBL" id="AL929318">
    <property type="status" value="NOT_ANNOTATED_CDS"/>
    <property type="molecule type" value="Genomic_DNA"/>
</dbReference>
<dbReference type="EMBL" id="BC021307">
    <property type="protein sequence ID" value="AAH21307.1"/>
    <property type="molecule type" value="mRNA"/>
</dbReference>
<dbReference type="CCDS" id="CCDS16598.1"/>
<dbReference type="RefSeq" id="NP_663505.1">
    <property type="nucleotide sequence ID" value="NM_145530.2"/>
</dbReference>
<dbReference type="SMR" id="Q8VDU1"/>
<dbReference type="FunCoup" id="Q8VDU1">
    <property type="interactions" value="297"/>
</dbReference>
<dbReference type="STRING" id="10090.ENSMUSP00000041411"/>
<dbReference type="PhosphoSitePlus" id="Q8VDU1"/>
<dbReference type="PaxDb" id="10090-ENSMUSP00000041411"/>
<dbReference type="Antibodypedia" id="23194">
    <property type="antibodies" value="23 antibodies from 11 providers"/>
</dbReference>
<dbReference type="DNASU" id="228543"/>
<dbReference type="Ensembl" id="ENSMUST00000037360.8">
    <property type="protein sequence ID" value="ENSMUSP00000041411.8"/>
    <property type="gene ID" value="ENSMUSG00000034226.8"/>
</dbReference>
<dbReference type="GeneID" id="228543"/>
<dbReference type="KEGG" id="mmu:228543"/>
<dbReference type="UCSC" id="uc008ltm.2">
    <property type="organism name" value="mouse"/>
</dbReference>
<dbReference type="AGR" id="MGI:2444227"/>
<dbReference type="CTD" id="171177"/>
<dbReference type="MGI" id="MGI:2444227">
    <property type="gene designation" value="Rhov"/>
</dbReference>
<dbReference type="VEuPathDB" id="HostDB:ENSMUSG00000034226"/>
<dbReference type="eggNOG" id="KOG0393">
    <property type="taxonomic scope" value="Eukaryota"/>
</dbReference>
<dbReference type="GeneTree" id="ENSGT00940000157624"/>
<dbReference type="HOGENOM" id="CLU_041217_21_7_1"/>
<dbReference type="InParanoid" id="Q8VDU1"/>
<dbReference type="OMA" id="TPELGIK"/>
<dbReference type="OrthoDB" id="8830751at2759"/>
<dbReference type="PhylomeDB" id="Q8VDU1"/>
<dbReference type="TreeFam" id="TF321839"/>
<dbReference type="Reactome" id="R-MMU-9013424">
    <property type="pathway name" value="RHOV GTPase cycle"/>
</dbReference>
<dbReference type="BioGRID-ORCS" id="228543">
    <property type="hits" value="1 hit in 79 CRISPR screens"/>
</dbReference>
<dbReference type="PRO" id="PR:Q8VDU1"/>
<dbReference type="Proteomes" id="UP000000589">
    <property type="component" value="Chromosome 2"/>
</dbReference>
<dbReference type="RNAct" id="Q8VDU1">
    <property type="molecule type" value="protein"/>
</dbReference>
<dbReference type="Bgee" id="ENSMUSG00000034226">
    <property type="expression patterns" value="Expressed in lip and 116 other cell types or tissues"/>
</dbReference>
<dbReference type="GO" id="GO:0010008">
    <property type="term" value="C:endosome membrane"/>
    <property type="evidence" value="ECO:0007669"/>
    <property type="project" value="UniProtKB-SubCell"/>
</dbReference>
<dbReference type="GO" id="GO:0005886">
    <property type="term" value="C:plasma membrane"/>
    <property type="evidence" value="ECO:0007669"/>
    <property type="project" value="UniProtKB-SubCell"/>
</dbReference>
<dbReference type="GO" id="GO:0005525">
    <property type="term" value="F:GTP binding"/>
    <property type="evidence" value="ECO:0007669"/>
    <property type="project" value="UniProtKB-KW"/>
</dbReference>
<dbReference type="GO" id="GO:0003924">
    <property type="term" value="F:GTPase activity"/>
    <property type="evidence" value="ECO:0007669"/>
    <property type="project" value="InterPro"/>
</dbReference>
<dbReference type="GO" id="GO:0046872">
    <property type="term" value="F:metal ion binding"/>
    <property type="evidence" value="ECO:0007669"/>
    <property type="project" value="UniProtKB-KW"/>
</dbReference>
<dbReference type="GO" id="GO:0007264">
    <property type="term" value="P:small GTPase-mediated signal transduction"/>
    <property type="evidence" value="ECO:0007669"/>
    <property type="project" value="InterPro"/>
</dbReference>
<dbReference type="CDD" id="cd04130">
    <property type="entry name" value="Wrch_1"/>
    <property type="match status" value="1"/>
</dbReference>
<dbReference type="FunFam" id="3.40.50.300:FF:000561">
    <property type="entry name" value="rho-related GTP-binding protein RhoV"/>
    <property type="match status" value="1"/>
</dbReference>
<dbReference type="Gene3D" id="3.40.50.300">
    <property type="entry name" value="P-loop containing nucleotide triphosphate hydrolases"/>
    <property type="match status" value="1"/>
</dbReference>
<dbReference type="InterPro" id="IPR027417">
    <property type="entry name" value="P-loop_NTPase"/>
</dbReference>
<dbReference type="InterPro" id="IPR005225">
    <property type="entry name" value="Small_GTP-bd"/>
</dbReference>
<dbReference type="InterPro" id="IPR001806">
    <property type="entry name" value="Small_GTPase"/>
</dbReference>
<dbReference type="InterPro" id="IPR003578">
    <property type="entry name" value="Small_GTPase_Rho"/>
</dbReference>
<dbReference type="NCBIfam" id="TIGR00231">
    <property type="entry name" value="small_GTP"/>
    <property type="match status" value="1"/>
</dbReference>
<dbReference type="PANTHER" id="PTHR24072">
    <property type="entry name" value="RHO FAMILY GTPASE"/>
    <property type="match status" value="1"/>
</dbReference>
<dbReference type="Pfam" id="PF00071">
    <property type="entry name" value="Ras"/>
    <property type="match status" value="1"/>
</dbReference>
<dbReference type="PRINTS" id="PR00449">
    <property type="entry name" value="RASTRNSFRMNG"/>
</dbReference>
<dbReference type="SMART" id="SM00175">
    <property type="entry name" value="RAB"/>
    <property type="match status" value="1"/>
</dbReference>
<dbReference type="SMART" id="SM00173">
    <property type="entry name" value="RAS"/>
    <property type="match status" value="1"/>
</dbReference>
<dbReference type="SMART" id="SM00174">
    <property type="entry name" value="RHO"/>
    <property type="match status" value="1"/>
</dbReference>
<dbReference type="SUPFAM" id="SSF52540">
    <property type="entry name" value="P-loop containing nucleoside triphosphate hydrolases"/>
    <property type="match status" value="1"/>
</dbReference>
<dbReference type="PROSITE" id="PS51420">
    <property type="entry name" value="RHO"/>
    <property type="match status" value="1"/>
</dbReference>
<evidence type="ECO:0000250" key="1">
    <source>
        <dbReference type="UniProtKB" id="P61586"/>
    </source>
</evidence>
<evidence type="ECO:0000250" key="2">
    <source>
        <dbReference type="UniProtKB" id="Q7L0Q8"/>
    </source>
</evidence>
<evidence type="ECO:0000250" key="3">
    <source>
        <dbReference type="UniProtKB" id="Q96L33"/>
    </source>
</evidence>
<evidence type="ECO:0000250" key="4">
    <source>
        <dbReference type="UniProtKB" id="Q9Z1Y0"/>
    </source>
</evidence>
<evidence type="ECO:0000256" key="5">
    <source>
        <dbReference type="SAM" id="MobiDB-lite"/>
    </source>
</evidence>
<evidence type="ECO:0000312" key="6">
    <source>
        <dbReference type="EMBL" id="AAH21307.1"/>
    </source>
</evidence>
<evidence type="ECO:0000312" key="7">
    <source>
        <dbReference type="EMBL" id="BAC29571.1"/>
    </source>
</evidence>
<evidence type="ECO:0000312" key="8">
    <source>
        <dbReference type="EMBL" id="BAC29732.1"/>
    </source>
</evidence>
<evidence type="ECO:0000312" key="9">
    <source>
        <dbReference type="MGI" id="MGI:2444227"/>
    </source>
</evidence>
<sequence>MPPRELSEAEPPPLPASTPPPRRRSAPPELGIKCVLVGDGAVGKSSLIVSYTCNGYPARYRPTALDTFSVQVLVDGAPVRIELWDTAGQEDFDRLRSLCYPDTDVFLACFSVVQPSSFQNITEKWLPEIRTHNPQAPVLLVGTQADLRDDVNVLIQLDQGGREGPVPQPQAQGLAEKIRACCYLECSALTQKNLKEVFDSAILSAIEHKARLEKKLNAKGVRTLSRCRWKKFFCFV</sequence>
<name>RHOV_MOUSE</name>
<comment type="function">
    <text evidence="4">Plays a role in the control of the actin cytoskeleton via activation of the JNK pathway.</text>
</comment>
<comment type="cofactor">
    <cofactor evidence="2">
        <name>Mg(2+)</name>
        <dbReference type="ChEBI" id="CHEBI:18420"/>
    </cofactor>
</comment>
<comment type="subunit">
    <text evidence="4">Interacts with PAK2.</text>
</comment>
<comment type="subcellular location">
    <subcellularLocation>
        <location evidence="4">Cell membrane</location>
        <topology evidence="4">Lipid-anchor</topology>
        <orientation evidence="4">Cytoplasmic side</orientation>
    </subcellularLocation>
    <subcellularLocation>
        <location evidence="4">Endosome membrane</location>
        <topology evidence="4">Lipid-anchor</topology>
        <orientation evidence="4">Cytoplasmic side</orientation>
    </subcellularLocation>
    <text evidence="4">Treatment with TNFA activates endosomal but not plasma membrane RHOV.</text>
</comment>
<comment type="similarity">
    <text evidence="4">Belongs to the small GTPase superfamily. Rho family.</text>
</comment>
<protein>
    <recommendedName>
        <fullName>Rho-related GTP-binding protein RhoV</fullName>
    </recommendedName>
</protein>
<gene>
    <name evidence="9" type="primary">Rhov</name>
</gene>